<comment type="function">
    <text evidence="1 7">Type 1 keratin (Probable). May maintain oral mucosal cell homeostasis and tissue organization in response to mechanical stress (By similarity).</text>
</comment>
<comment type="subunit">
    <text evidence="7">Heterotetramer of two type I and two type II keratins.</text>
</comment>
<comment type="tissue specificity">
    <text evidence="6">Expressed in epidermis.</text>
</comment>
<comment type="miscellaneous">
    <text>There are two types of cytoskeletal and microfibrillar keratin: I (acidic; 40-55 kDa) and II (neutral to basic; 56-70 kDa).</text>
</comment>
<comment type="similarity">
    <text evidence="4">Belongs to the intermediate filament family.</text>
</comment>
<reference evidence="7 8" key="1">
    <citation type="journal article" date="2002" name="Differentiation">
        <title>Type I keratin cDNAs from the rainbow trout: independent radiation of keratins in fish.</title>
        <authorList>
            <person name="Schaffeld M."/>
            <person name="Hoffling S."/>
            <person name="Haberkamp M."/>
            <person name="Conrad M."/>
            <person name="Markl J."/>
        </authorList>
    </citation>
    <scope>NUCLEOTIDE SEQUENCE [MRNA]</scope>
    <scope>TISSUE SPECIFICITY</scope>
    <source>
        <tissue evidence="8">Skin</tissue>
    </source>
</reference>
<protein>
    <recommendedName>
        <fullName>Keratin, type I cytoskeletal 13</fullName>
    </recommendedName>
    <alternativeName>
        <fullName>Cytokeratin-13</fullName>
        <shortName>CK-13</shortName>
    </alternativeName>
    <alternativeName>
        <fullName>Keratin-13</fullName>
        <shortName>K13</shortName>
    </alternativeName>
</protein>
<sequence length="492" mass="51971">MSFSRSSMSYSSSGGGGGGGTMSMRSGGGGGMGMGSSRFSSMGGGGGGGGAMRSGSVYGGAGGSGVRISSSSFGSGGGGGGGGYGFGMGGGGGGGGGFGMGGGGGGGGADMNVSANEKATMQNLNDRLSTYLEKVRKLEAANAELELKIRQFMESKTSPSSRDYSAFYAIIADLQDKIQAATRVNGGIYLSIDNAKLAADDFRTKYENELAMRQSVEADIAGLKRMLDEMTMARSDLEMQIEGLKEELIYLKKNHEEELLAMRTQMTGQINVEVDAAPQEDLSRVMAEIREQYESVSAKNQRDLEAWFQTKTETLNKEVASSTEVLQTSKSEISEIRRTLQALEIELQSQQSMKGSLENTLAETEGRYSMQLGRLQNQVTSLEEQLVSLRSDMERQGQEYKMLLDIKTRLEMEIAEYRRLLDGEASGLGASSSKSVQKSSSSGLSSSVSSSTVSSSSSVPSSTTSTTRKVVIVTEEIVDGKVVSTSETKHTT</sequence>
<accession>Q8JFQ6</accession>
<proteinExistence type="evidence at transcript level"/>
<name>K1C13_ONCMY</name>
<evidence type="ECO:0000250" key="1">
    <source>
        <dbReference type="UniProtKB" id="P08730"/>
    </source>
</evidence>
<evidence type="ECO:0000250" key="2">
    <source>
        <dbReference type="UniProtKB" id="P13646"/>
    </source>
</evidence>
<evidence type="ECO:0000255" key="3"/>
<evidence type="ECO:0000255" key="4">
    <source>
        <dbReference type="PROSITE-ProRule" id="PRU01188"/>
    </source>
</evidence>
<evidence type="ECO:0000256" key="5">
    <source>
        <dbReference type="SAM" id="MobiDB-lite"/>
    </source>
</evidence>
<evidence type="ECO:0000269" key="6">
    <source>
    </source>
</evidence>
<evidence type="ECO:0000305" key="7"/>
<evidence type="ECO:0000312" key="8">
    <source>
        <dbReference type="EMBL" id="CAD20810.1"/>
    </source>
</evidence>
<gene>
    <name evidence="2" type="primary">krt13</name>
</gene>
<feature type="chain" id="PRO_0000063650" description="Keratin, type I cytoskeletal 13">
    <location>
        <begin position="1"/>
        <end position="492"/>
    </location>
</feature>
<feature type="domain" description="IF rod" evidence="4">
    <location>
        <begin position="117"/>
        <end position="428"/>
    </location>
</feature>
<feature type="region of interest" description="Head" evidence="3">
    <location>
        <begin position="1"/>
        <end position="116"/>
    </location>
</feature>
<feature type="region of interest" description="Disordered" evidence="5">
    <location>
        <begin position="1"/>
        <end position="48"/>
    </location>
</feature>
<feature type="region of interest" description="Coil 1A" evidence="3">
    <location>
        <begin position="117"/>
        <end position="152"/>
    </location>
</feature>
<feature type="region of interest" description="Linker 1" evidence="3">
    <location>
        <begin position="154"/>
        <end position="170"/>
    </location>
</feature>
<feature type="region of interest" description="Coil 1B" evidence="3">
    <location>
        <begin position="171"/>
        <end position="262"/>
    </location>
</feature>
<feature type="region of interest" description="Linker 12" evidence="3">
    <location>
        <begin position="263"/>
        <end position="285"/>
    </location>
</feature>
<feature type="region of interest" description="Coil 2" evidence="3">
    <location>
        <begin position="286"/>
        <end position="424"/>
    </location>
</feature>
<feature type="region of interest" description="Tail" evidence="3">
    <location>
        <begin position="425"/>
        <end position="492"/>
    </location>
</feature>
<feature type="region of interest" description="Disordered" evidence="5">
    <location>
        <begin position="426"/>
        <end position="470"/>
    </location>
</feature>
<feature type="compositionally biased region" description="Low complexity" evidence="5">
    <location>
        <begin position="1"/>
        <end position="12"/>
    </location>
</feature>
<feature type="compositionally biased region" description="Gly residues" evidence="5">
    <location>
        <begin position="13"/>
        <end position="34"/>
    </location>
</feature>
<feature type="compositionally biased region" description="Low complexity" evidence="5">
    <location>
        <begin position="431"/>
        <end position="470"/>
    </location>
</feature>
<keyword id="KW-0175">Coiled coil</keyword>
<keyword id="KW-0403">Intermediate filament</keyword>
<keyword id="KW-0416">Keratin</keyword>
<organism>
    <name type="scientific">Oncorhynchus mykiss</name>
    <name type="common">Rainbow trout</name>
    <name type="synonym">Salmo gairdneri</name>
    <dbReference type="NCBI Taxonomy" id="8022"/>
    <lineage>
        <taxon>Eukaryota</taxon>
        <taxon>Metazoa</taxon>
        <taxon>Chordata</taxon>
        <taxon>Craniata</taxon>
        <taxon>Vertebrata</taxon>
        <taxon>Euteleostomi</taxon>
        <taxon>Actinopterygii</taxon>
        <taxon>Neopterygii</taxon>
        <taxon>Teleostei</taxon>
        <taxon>Protacanthopterygii</taxon>
        <taxon>Salmoniformes</taxon>
        <taxon>Salmonidae</taxon>
        <taxon>Salmoninae</taxon>
        <taxon>Oncorhynchus</taxon>
    </lineage>
</organism>
<dbReference type="EMBL" id="AJ427867">
    <property type="protein sequence ID" value="CAD20810.1"/>
    <property type="molecule type" value="mRNA"/>
</dbReference>
<dbReference type="RefSeq" id="NP_001117848.1">
    <property type="nucleotide sequence ID" value="NM_001124376.1"/>
</dbReference>
<dbReference type="SMR" id="Q8JFQ6"/>
<dbReference type="Ensembl" id="ENSOMYT00000043383.2">
    <property type="protein sequence ID" value="ENSOMYP00000039741.2"/>
    <property type="gene ID" value="ENSOMYG00000047933.1"/>
</dbReference>
<dbReference type="GeneID" id="100136068"/>
<dbReference type="KEGG" id="omy:100136068"/>
<dbReference type="CTD" id="100136068"/>
<dbReference type="GeneTree" id="ENSGT00950000182969"/>
<dbReference type="OrthoDB" id="2441647at2759"/>
<dbReference type="Proteomes" id="UP000694395">
    <property type="component" value="Chromosome 13"/>
</dbReference>
<dbReference type="GO" id="GO:0005882">
    <property type="term" value="C:intermediate filament"/>
    <property type="evidence" value="ECO:0007669"/>
    <property type="project" value="UniProtKB-KW"/>
</dbReference>
<dbReference type="GO" id="GO:0005198">
    <property type="term" value="F:structural molecule activity"/>
    <property type="evidence" value="ECO:0007669"/>
    <property type="project" value="InterPro"/>
</dbReference>
<dbReference type="GO" id="GO:0043555">
    <property type="term" value="P:regulation of translation in response to stress"/>
    <property type="evidence" value="ECO:0000250"/>
    <property type="project" value="UniProtKB"/>
</dbReference>
<dbReference type="FunFam" id="1.20.5.1160:FF:000002">
    <property type="entry name" value="Type I keratin 10"/>
    <property type="match status" value="1"/>
</dbReference>
<dbReference type="FunFam" id="1.20.5.170:FF:000002">
    <property type="entry name" value="Type I keratin KA11"/>
    <property type="match status" value="1"/>
</dbReference>
<dbReference type="FunFam" id="1.20.5.500:FF:000001">
    <property type="entry name" value="Type II keratin 23"/>
    <property type="match status" value="1"/>
</dbReference>
<dbReference type="Gene3D" id="1.20.5.170">
    <property type="match status" value="1"/>
</dbReference>
<dbReference type="Gene3D" id="1.20.5.500">
    <property type="entry name" value="Single helix bin"/>
    <property type="match status" value="1"/>
</dbReference>
<dbReference type="Gene3D" id="1.20.5.1160">
    <property type="entry name" value="Vasodilator-stimulated phosphoprotein"/>
    <property type="match status" value="1"/>
</dbReference>
<dbReference type="InterPro" id="IPR039008">
    <property type="entry name" value="IF_rod_dom"/>
</dbReference>
<dbReference type="InterPro" id="IPR002957">
    <property type="entry name" value="Keratin_I"/>
</dbReference>
<dbReference type="PANTHER" id="PTHR23239">
    <property type="entry name" value="INTERMEDIATE FILAMENT"/>
    <property type="match status" value="1"/>
</dbReference>
<dbReference type="PANTHER" id="PTHR23239:SF367">
    <property type="entry name" value="KERATIN 15-RELATED"/>
    <property type="match status" value="1"/>
</dbReference>
<dbReference type="Pfam" id="PF00038">
    <property type="entry name" value="Filament"/>
    <property type="match status" value="1"/>
</dbReference>
<dbReference type="PRINTS" id="PR01248">
    <property type="entry name" value="TYPE1KERATIN"/>
</dbReference>
<dbReference type="SMART" id="SM01391">
    <property type="entry name" value="Filament"/>
    <property type="match status" value="1"/>
</dbReference>
<dbReference type="SUPFAM" id="SSF64593">
    <property type="entry name" value="Intermediate filament protein, coiled coil region"/>
    <property type="match status" value="2"/>
</dbReference>
<dbReference type="PROSITE" id="PS51842">
    <property type="entry name" value="IF_ROD_2"/>
    <property type="match status" value="1"/>
</dbReference>